<comment type="function">
    <text evidence="1">Catalyzes the reversible adenylation of nicotinate mononucleotide (NaMN) to nicotinic acid adenine dinucleotide (NaAD).</text>
</comment>
<comment type="catalytic activity">
    <reaction evidence="1">
        <text>nicotinate beta-D-ribonucleotide + ATP + H(+) = deamido-NAD(+) + diphosphate</text>
        <dbReference type="Rhea" id="RHEA:22860"/>
        <dbReference type="ChEBI" id="CHEBI:15378"/>
        <dbReference type="ChEBI" id="CHEBI:30616"/>
        <dbReference type="ChEBI" id="CHEBI:33019"/>
        <dbReference type="ChEBI" id="CHEBI:57502"/>
        <dbReference type="ChEBI" id="CHEBI:58437"/>
        <dbReference type="EC" id="2.7.7.18"/>
    </reaction>
</comment>
<comment type="pathway">
    <text evidence="1">Cofactor biosynthesis; NAD(+) biosynthesis; deamido-NAD(+) from nicotinate D-ribonucleotide: step 1/1.</text>
</comment>
<comment type="similarity">
    <text evidence="1">Belongs to the NadD family.</text>
</comment>
<name>NADD_CAMJJ</name>
<dbReference type="EC" id="2.7.7.18" evidence="1"/>
<dbReference type="EMBL" id="CP000538">
    <property type="protein sequence ID" value="EAQ72605.1"/>
    <property type="molecule type" value="Genomic_DNA"/>
</dbReference>
<dbReference type="RefSeq" id="WP_002927405.1">
    <property type="nucleotide sequence ID" value="NC_008787.1"/>
</dbReference>
<dbReference type="SMR" id="A1W118"/>
<dbReference type="KEGG" id="cjj:CJJ81176_1403"/>
<dbReference type="eggNOG" id="COG1057">
    <property type="taxonomic scope" value="Bacteria"/>
</dbReference>
<dbReference type="HOGENOM" id="CLU_069765_3_2_7"/>
<dbReference type="UniPathway" id="UPA00253">
    <property type="reaction ID" value="UER00332"/>
</dbReference>
<dbReference type="Proteomes" id="UP000000646">
    <property type="component" value="Chromosome"/>
</dbReference>
<dbReference type="GO" id="GO:0005524">
    <property type="term" value="F:ATP binding"/>
    <property type="evidence" value="ECO:0007669"/>
    <property type="project" value="UniProtKB-KW"/>
</dbReference>
<dbReference type="GO" id="GO:0004515">
    <property type="term" value="F:nicotinate-nucleotide adenylyltransferase activity"/>
    <property type="evidence" value="ECO:0007669"/>
    <property type="project" value="UniProtKB-UniRule"/>
</dbReference>
<dbReference type="GO" id="GO:0009435">
    <property type="term" value="P:NAD biosynthetic process"/>
    <property type="evidence" value="ECO:0007669"/>
    <property type="project" value="UniProtKB-UniRule"/>
</dbReference>
<dbReference type="CDD" id="cd02165">
    <property type="entry name" value="NMNAT"/>
    <property type="match status" value="1"/>
</dbReference>
<dbReference type="Gene3D" id="3.40.50.620">
    <property type="entry name" value="HUPs"/>
    <property type="match status" value="1"/>
</dbReference>
<dbReference type="HAMAP" id="MF_00244">
    <property type="entry name" value="NaMN_adenylyltr"/>
    <property type="match status" value="1"/>
</dbReference>
<dbReference type="InterPro" id="IPR004821">
    <property type="entry name" value="Cyt_trans-like"/>
</dbReference>
<dbReference type="InterPro" id="IPR005248">
    <property type="entry name" value="NadD/NMNAT"/>
</dbReference>
<dbReference type="InterPro" id="IPR014729">
    <property type="entry name" value="Rossmann-like_a/b/a_fold"/>
</dbReference>
<dbReference type="NCBIfam" id="TIGR00125">
    <property type="entry name" value="cyt_tran_rel"/>
    <property type="match status" value="1"/>
</dbReference>
<dbReference type="NCBIfam" id="TIGR00482">
    <property type="entry name" value="nicotinate (nicotinamide) nucleotide adenylyltransferase"/>
    <property type="match status" value="1"/>
</dbReference>
<dbReference type="PANTHER" id="PTHR39321">
    <property type="entry name" value="NICOTINATE-NUCLEOTIDE ADENYLYLTRANSFERASE-RELATED"/>
    <property type="match status" value="1"/>
</dbReference>
<dbReference type="PANTHER" id="PTHR39321:SF3">
    <property type="entry name" value="PHOSPHOPANTETHEINE ADENYLYLTRANSFERASE"/>
    <property type="match status" value="1"/>
</dbReference>
<dbReference type="Pfam" id="PF01467">
    <property type="entry name" value="CTP_transf_like"/>
    <property type="match status" value="1"/>
</dbReference>
<dbReference type="SUPFAM" id="SSF52374">
    <property type="entry name" value="Nucleotidylyl transferase"/>
    <property type="match status" value="1"/>
</dbReference>
<reference key="1">
    <citation type="submission" date="2006-12" db="EMBL/GenBank/DDBJ databases">
        <authorList>
            <person name="Fouts D.E."/>
            <person name="Nelson K.E."/>
            <person name="Sebastian Y."/>
        </authorList>
    </citation>
    <scope>NUCLEOTIDE SEQUENCE [LARGE SCALE GENOMIC DNA]</scope>
    <source>
        <strain>81-176</strain>
    </source>
</reference>
<feature type="chain" id="PRO_0000310103" description="Probable nicotinate-nucleotide adenylyltransferase">
    <location>
        <begin position="1"/>
        <end position="181"/>
    </location>
</feature>
<accession>A1W118</accession>
<keyword id="KW-0067">ATP-binding</keyword>
<keyword id="KW-0520">NAD</keyword>
<keyword id="KW-0547">Nucleotide-binding</keyword>
<keyword id="KW-0548">Nucleotidyltransferase</keyword>
<keyword id="KW-0662">Pyridine nucleotide biosynthesis</keyword>
<keyword id="KW-0808">Transferase</keyword>
<organism>
    <name type="scientific">Campylobacter jejuni subsp. jejuni serotype O:23/36 (strain 81-176)</name>
    <dbReference type="NCBI Taxonomy" id="354242"/>
    <lineage>
        <taxon>Bacteria</taxon>
        <taxon>Pseudomonadati</taxon>
        <taxon>Campylobacterota</taxon>
        <taxon>Epsilonproteobacteria</taxon>
        <taxon>Campylobacterales</taxon>
        <taxon>Campylobacteraceae</taxon>
        <taxon>Campylobacter</taxon>
    </lineage>
</organism>
<protein>
    <recommendedName>
        <fullName evidence="1">Probable nicotinate-nucleotide adenylyltransferase</fullName>
        <ecNumber evidence="1">2.7.7.18</ecNumber>
    </recommendedName>
    <alternativeName>
        <fullName evidence="1">Deamido-NAD(+) diphosphorylase</fullName>
    </alternativeName>
    <alternativeName>
        <fullName evidence="1">Deamido-NAD(+) pyrophosphorylase</fullName>
    </alternativeName>
    <alternativeName>
        <fullName evidence="1">Nicotinate mononucleotide adenylyltransferase</fullName>
        <shortName evidence="1">NaMN adenylyltransferase</shortName>
    </alternativeName>
</protein>
<proteinExistence type="inferred from homology"/>
<sequence length="181" mass="21312">MKIALFGGSFDPPHNGHNSVVLEALEKLDIDKLIIMPTYINPFKKSFSADEKQRFLWVKKLWGHLPKVEICDFEIRQKRPVPSIESVKYLYKLYNPSKFYLLIGADHLEKLHLWHDFEKLNSLVEFVIANRNDIGIPKNFKDLKTNKKIASSFIRDTLNTNEVCEEIKDEVKKYYEKLQKN</sequence>
<evidence type="ECO:0000255" key="1">
    <source>
        <dbReference type="HAMAP-Rule" id="MF_00244"/>
    </source>
</evidence>
<gene>
    <name evidence="1" type="primary">nadD</name>
    <name type="ordered locus">CJJ81176_1403</name>
</gene>